<evidence type="ECO:0000250" key="1">
    <source>
        <dbReference type="UniProtKB" id="O49482"/>
    </source>
</evidence>
<evidence type="ECO:0000305" key="2"/>
<keyword id="KW-0438">Lignin biosynthesis</keyword>
<keyword id="KW-0479">Metal-binding</keyword>
<keyword id="KW-0521">NADP</keyword>
<keyword id="KW-0560">Oxidoreductase</keyword>
<keyword id="KW-0862">Zinc</keyword>
<dbReference type="EC" id="1.1.1.195" evidence="1"/>
<dbReference type="EMBL" id="AJ231135">
    <property type="protein sequence ID" value="CAA13177.1"/>
    <property type="molecule type" value="mRNA"/>
</dbReference>
<dbReference type="SMR" id="O82056"/>
<dbReference type="UniPathway" id="UPA00711"/>
<dbReference type="GO" id="GO:0045551">
    <property type="term" value="F:cinnamyl-alcohol dehydrogenase activity"/>
    <property type="evidence" value="ECO:0007669"/>
    <property type="project" value="UniProtKB-EC"/>
</dbReference>
<dbReference type="GO" id="GO:0050268">
    <property type="term" value="F:coniferyl-alcohol dehydrogenase activity"/>
    <property type="evidence" value="ECO:0007669"/>
    <property type="project" value="RHEA"/>
</dbReference>
<dbReference type="GO" id="GO:0008270">
    <property type="term" value="F:zinc ion binding"/>
    <property type="evidence" value="ECO:0007669"/>
    <property type="project" value="InterPro"/>
</dbReference>
<dbReference type="GO" id="GO:0009809">
    <property type="term" value="P:lignin biosynthetic process"/>
    <property type="evidence" value="ECO:0007669"/>
    <property type="project" value="UniProtKB-KW"/>
</dbReference>
<dbReference type="CDD" id="cd05283">
    <property type="entry name" value="CAD1"/>
    <property type="match status" value="1"/>
</dbReference>
<dbReference type="FunFam" id="3.40.50.720:FF:000022">
    <property type="entry name" value="Cinnamyl alcohol dehydrogenase"/>
    <property type="match status" value="1"/>
</dbReference>
<dbReference type="FunFam" id="3.90.180.10:FF:000004">
    <property type="entry name" value="probable cinnamyl alcohol dehydrogenase"/>
    <property type="match status" value="1"/>
</dbReference>
<dbReference type="FunFam" id="3.90.180.10:FF:000100">
    <property type="entry name" value="Putative cinnamyl alcohol dehydrogenase 6"/>
    <property type="match status" value="1"/>
</dbReference>
<dbReference type="Gene3D" id="3.90.180.10">
    <property type="entry name" value="Medium-chain alcohol dehydrogenases, catalytic domain"/>
    <property type="match status" value="1"/>
</dbReference>
<dbReference type="Gene3D" id="3.40.50.720">
    <property type="entry name" value="NAD(P)-binding Rossmann-like Domain"/>
    <property type="match status" value="1"/>
</dbReference>
<dbReference type="InterPro" id="IPR013149">
    <property type="entry name" value="ADH-like_C"/>
</dbReference>
<dbReference type="InterPro" id="IPR013154">
    <property type="entry name" value="ADH-like_N"/>
</dbReference>
<dbReference type="InterPro" id="IPR002328">
    <property type="entry name" value="ADH_Zn_CS"/>
</dbReference>
<dbReference type="InterPro" id="IPR047109">
    <property type="entry name" value="CAD-like"/>
</dbReference>
<dbReference type="InterPro" id="IPR011032">
    <property type="entry name" value="GroES-like_sf"/>
</dbReference>
<dbReference type="InterPro" id="IPR036291">
    <property type="entry name" value="NAD(P)-bd_dom_sf"/>
</dbReference>
<dbReference type="InterPro" id="IPR020843">
    <property type="entry name" value="PKS_ER"/>
</dbReference>
<dbReference type="PANTHER" id="PTHR42683">
    <property type="entry name" value="ALDEHYDE REDUCTASE"/>
    <property type="match status" value="1"/>
</dbReference>
<dbReference type="Pfam" id="PF08240">
    <property type="entry name" value="ADH_N"/>
    <property type="match status" value="1"/>
</dbReference>
<dbReference type="Pfam" id="PF00107">
    <property type="entry name" value="ADH_zinc_N"/>
    <property type="match status" value="1"/>
</dbReference>
<dbReference type="SMART" id="SM00829">
    <property type="entry name" value="PKS_ER"/>
    <property type="match status" value="1"/>
</dbReference>
<dbReference type="SUPFAM" id="SSF50129">
    <property type="entry name" value="GroES-like"/>
    <property type="match status" value="1"/>
</dbReference>
<dbReference type="SUPFAM" id="SSF51735">
    <property type="entry name" value="NAD(P)-binding Rossmann-fold domains"/>
    <property type="match status" value="1"/>
</dbReference>
<dbReference type="PROSITE" id="PS00059">
    <property type="entry name" value="ADH_ZINC"/>
    <property type="match status" value="1"/>
</dbReference>
<name>CADH_SACOF</name>
<feature type="chain" id="PRO_0000160804" description="Probable cinnamyl alcohol dehydrogenase">
    <location>
        <begin position="1"/>
        <end position="365"/>
    </location>
</feature>
<feature type="binding site" evidence="1">
    <location>
        <position position="47"/>
    </location>
    <ligand>
        <name>Zn(2+)</name>
        <dbReference type="ChEBI" id="CHEBI:29105"/>
        <label>1</label>
        <note>catalytic</note>
    </ligand>
</feature>
<feature type="binding site" evidence="1">
    <location>
        <position position="49"/>
    </location>
    <ligand>
        <name>NADP(+)</name>
        <dbReference type="ChEBI" id="CHEBI:58349"/>
    </ligand>
</feature>
<feature type="binding site" evidence="1">
    <location>
        <position position="69"/>
    </location>
    <ligand>
        <name>Zn(2+)</name>
        <dbReference type="ChEBI" id="CHEBI:29105"/>
        <label>1</label>
        <note>catalytic</note>
    </ligand>
</feature>
<feature type="binding site" evidence="1">
    <location>
        <position position="70"/>
    </location>
    <ligand>
        <name>Zn(2+)</name>
        <dbReference type="ChEBI" id="CHEBI:29105"/>
        <label>1</label>
        <note>catalytic</note>
    </ligand>
</feature>
<feature type="binding site" evidence="1">
    <location>
        <position position="100"/>
    </location>
    <ligand>
        <name>Zn(2+)</name>
        <dbReference type="ChEBI" id="CHEBI:29105"/>
        <label>2</label>
    </ligand>
</feature>
<feature type="binding site" evidence="1">
    <location>
        <position position="103"/>
    </location>
    <ligand>
        <name>Zn(2+)</name>
        <dbReference type="ChEBI" id="CHEBI:29105"/>
        <label>2</label>
    </ligand>
</feature>
<feature type="binding site" evidence="1">
    <location>
        <position position="106"/>
    </location>
    <ligand>
        <name>Zn(2+)</name>
        <dbReference type="ChEBI" id="CHEBI:29105"/>
        <label>2</label>
    </ligand>
</feature>
<feature type="binding site" evidence="1">
    <location>
        <position position="114"/>
    </location>
    <ligand>
        <name>Zn(2+)</name>
        <dbReference type="ChEBI" id="CHEBI:29105"/>
        <label>2</label>
    </ligand>
</feature>
<feature type="binding site" evidence="1">
    <location>
        <position position="163"/>
    </location>
    <ligand>
        <name>Zn(2+)</name>
        <dbReference type="ChEBI" id="CHEBI:29105"/>
        <label>1</label>
        <note>catalytic</note>
    </ligand>
</feature>
<feature type="binding site" evidence="1">
    <location>
        <position position="167"/>
    </location>
    <ligand>
        <name>NADP(+)</name>
        <dbReference type="ChEBI" id="CHEBI:58349"/>
    </ligand>
</feature>
<feature type="binding site" evidence="1">
    <location>
        <begin position="188"/>
        <end position="193"/>
    </location>
    <ligand>
        <name>NADP(+)</name>
        <dbReference type="ChEBI" id="CHEBI:58349"/>
    </ligand>
</feature>
<feature type="binding site" evidence="1">
    <location>
        <begin position="211"/>
        <end position="216"/>
    </location>
    <ligand>
        <name>NADP(+)</name>
        <dbReference type="ChEBI" id="CHEBI:58349"/>
    </ligand>
</feature>
<feature type="binding site" evidence="1">
    <location>
        <position position="251"/>
    </location>
    <ligand>
        <name>NADP(+)</name>
        <dbReference type="ChEBI" id="CHEBI:58349"/>
    </ligand>
</feature>
<feature type="binding site" evidence="1">
    <location>
        <position position="275"/>
    </location>
    <ligand>
        <name>NADP(+)</name>
        <dbReference type="ChEBI" id="CHEBI:58349"/>
    </ligand>
</feature>
<feature type="binding site" evidence="1">
    <location>
        <begin position="298"/>
        <end position="300"/>
    </location>
    <ligand>
        <name>NADP(+)</name>
        <dbReference type="ChEBI" id="CHEBI:58349"/>
    </ligand>
</feature>
<gene>
    <name type="primary">CAD</name>
</gene>
<organism>
    <name type="scientific">Saccharum officinarum</name>
    <name type="common">Sugarcane</name>
    <dbReference type="NCBI Taxonomy" id="4547"/>
    <lineage>
        <taxon>Eukaryota</taxon>
        <taxon>Viridiplantae</taxon>
        <taxon>Streptophyta</taxon>
        <taxon>Embryophyta</taxon>
        <taxon>Tracheophyta</taxon>
        <taxon>Spermatophyta</taxon>
        <taxon>Magnoliopsida</taxon>
        <taxon>Liliopsida</taxon>
        <taxon>Poales</taxon>
        <taxon>Poaceae</taxon>
        <taxon>PACMAD clade</taxon>
        <taxon>Panicoideae</taxon>
        <taxon>Andropogonodae</taxon>
        <taxon>Andropogoneae</taxon>
        <taxon>Saccharinae</taxon>
        <taxon>Saccharum</taxon>
        <taxon>Saccharum officinarum species complex</taxon>
    </lineage>
</organism>
<protein>
    <recommendedName>
        <fullName>Probable cinnamyl alcohol dehydrogenase</fullName>
        <shortName>CAD</shortName>
        <ecNumber evidence="1">1.1.1.195</ecNumber>
    </recommendedName>
</protein>
<reference key="1">
    <citation type="journal article" date="1999" name="Plant Sci.">
        <title>Molecular cloning of cDNAs coding for three sugarcane enzymes involved in lignification.</title>
        <authorList>
            <person name="Selman-Housein G."/>
            <person name="Lopez M."/>
            <person name="Hernandez D."/>
            <person name="Civardi L."/>
            <person name="Miranda F."/>
            <person name="Rigau J."/>
            <person name="Puigdomenech P."/>
        </authorList>
    </citation>
    <scope>NUCLEOTIDE SEQUENCE [MRNA]</scope>
    <source>
        <strain>cv. Jaronu 60-5</strain>
        <tissue>Root</tissue>
    </source>
</reference>
<proteinExistence type="evidence at transcript level"/>
<accession>O82056</accession>
<sequence length="365" mass="38670">MGSLASERKVVGWAARDATGHLAPYTYTLRSTGPEDVVVKVLYCGICHTDIHQAKNHLGASKYPMVPGHEVVGEVVEVGPEVTKYGVGDVVGVGVIVGCCRECKPCKANVEQYCNKKIWSYNDVYTDGRPTQGGFASTMVVDQKFVMKIPAGLAPEQAAPLLCAGVTVYSPLKAFGLTTPGLRGAILGLGGVGHMGVKVAKAMGHHVTVISSSSKKRAEAMDHLGADAYLVSSDAAAMAAAADSLDYIIDTVPVHHPLEPYLALLKLDGKHVLLGVIGEPLSFVSPMVMLGRKAITGSFIGSIDETAEVLQFCVDKGLTSQIEVVKMGYVNEALDRLERNDVRYRFVVDVAGSNVEEVAADAPSN</sequence>
<comment type="function">
    <text evidence="1">Involved in lignin biosynthesis. Catalyzes the final step specific for the production of lignin monomers. Catalyzes the NADPH-dependent reduction of coniferaldehyde, 5-hydroxyconiferaldehyde, sinapaldehyde, 4-coumaraldehyde and caffeyl aldehyde to their respective alcohols.</text>
</comment>
<comment type="catalytic activity">
    <reaction evidence="1">
        <text>(E)-cinnamyl alcohol + NADP(+) = (E)-cinnamaldehyde + NADPH + H(+)</text>
        <dbReference type="Rhea" id="RHEA:10392"/>
        <dbReference type="ChEBI" id="CHEBI:15378"/>
        <dbReference type="ChEBI" id="CHEBI:16731"/>
        <dbReference type="ChEBI" id="CHEBI:33227"/>
        <dbReference type="ChEBI" id="CHEBI:57783"/>
        <dbReference type="ChEBI" id="CHEBI:58349"/>
        <dbReference type="EC" id="1.1.1.195"/>
    </reaction>
    <physiologicalReaction direction="right-to-left" evidence="1">
        <dbReference type="Rhea" id="RHEA:10394"/>
    </physiologicalReaction>
</comment>
<comment type="catalytic activity">
    <reaction evidence="1">
        <text>(E)-coniferol + NADP(+) = (E)-coniferaldehyde + NADPH + H(+)</text>
        <dbReference type="Rhea" id="RHEA:22444"/>
        <dbReference type="ChEBI" id="CHEBI:15378"/>
        <dbReference type="ChEBI" id="CHEBI:16547"/>
        <dbReference type="ChEBI" id="CHEBI:17745"/>
        <dbReference type="ChEBI" id="CHEBI:57783"/>
        <dbReference type="ChEBI" id="CHEBI:58349"/>
        <dbReference type="EC" id="1.1.1.195"/>
    </reaction>
    <physiologicalReaction direction="right-to-left" evidence="1">
        <dbReference type="Rhea" id="RHEA:22446"/>
    </physiologicalReaction>
</comment>
<comment type="catalytic activity">
    <reaction evidence="1">
        <text>(E)-sinapyl alcohol + NADP(+) = (E)-sinapaldehyde + NADPH + H(+)</text>
        <dbReference type="Rhea" id="RHEA:45704"/>
        <dbReference type="ChEBI" id="CHEBI:15378"/>
        <dbReference type="ChEBI" id="CHEBI:27949"/>
        <dbReference type="ChEBI" id="CHEBI:57783"/>
        <dbReference type="ChEBI" id="CHEBI:58349"/>
        <dbReference type="ChEBI" id="CHEBI:64557"/>
        <dbReference type="EC" id="1.1.1.195"/>
    </reaction>
    <physiologicalReaction direction="right-to-left" evidence="1">
        <dbReference type="Rhea" id="RHEA:45706"/>
    </physiologicalReaction>
</comment>
<comment type="catalytic activity">
    <reaction evidence="1">
        <text>(E)-4-coumaroyl alcohol + NADP(+) = (E)-4-coumaraldehyde + NADPH + H(+)</text>
        <dbReference type="Rhea" id="RHEA:45724"/>
        <dbReference type="ChEBI" id="CHEBI:15378"/>
        <dbReference type="ChEBI" id="CHEBI:28353"/>
        <dbReference type="ChEBI" id="CHEBI:57783"/>
        <dbReference type="ChEBI" id="CHEBI:58349"/>
        <dbReference type="ChEBI" id="CHEBI:64555"/>
        <dbReference type="EC" id="1.1.1.195"/>
    </reaction>
    <physiologicalReaction direction="right-to-left" evidence="1">
        <dbReference type="Rhea" id="RHEA:45726"/>
    </physiologicalReaction>
</comment>
<comment type="catalytic activity">
    <reaction evidence="1">
        <text>(E)-caffeyl alcohol + NADP(+) = (E)-caffeyl aldehyde + NADPH + H(+)</text>
        <dbReference type="Rhea" id="RHEA:45728"/>
        <dbReference type="ChEBI" id="CHEBI:15378"/>
        <dbReference type="ChEBI" id="CHEBI:28323"/>
        <dbReference type="ChEBI" id="CHEBI:31334"/>
        <dbReference type="ChEBI" id="CHEBI:57783"/>
        <dbReference type="ChEBI" id="CHEBI:58349"/>
    </reaction>
    <physiologicalReaction direction="right-to-left" evidence="1">
        <dbReference type="Rhea" id="RHEA:45730"/>
    </physiologicalReaction>
</comment>
<comment type="cofactor">
    <cofactor evidence="1">
        <name>Zn(2+)</name>
        <dbReference type="ChEBI" id="CHEBI:29105"/>
    </cofactor>
    <text evidence="1">Binds 2 Zn(2+) ions per subunit.</text>
</comment>
<comment type="pathway">
    <text evidence="1">Aromatic compound metabolism; phenylpropanoid biosynthesis.</text>
</comment>
<comment type="subunit">
    <text evidence="1">Homodimer.</text>
</comment>
<comment type="similarity">
    <text evidence="2">Belongs to the zinc-containing alcohol dehydrogenase family.</text>
</comment>